<organism>
    <name type="scientific">Shewanella frigidimarina (strain NCIMB 400)</name>
    <dbReference type="NCBI Taxonomy" id="318167"/>
    <lineage>
        <taxon>Bacteria</taxon>
        <taxon>Pseudomonadati</taxon>
        <taxon>Pseudomonadota</taxon>
        <taxon>Gammaproteobacteria</taxon>
        <taxon>Alteromonadales</taxon>
        <taxon>Shewanellaceae</taxon>
        <taxon>Shewanella</taxon>
    </lineage>
</organism>
<dbReference type="EC" id="2.7.7.77" evidence="1"/>
<dbReference type="EMBL" id="CP000447">
    <property type="protein sequence ID" value="ABI73745.1"/>
    <property type="molecule type" value="Genomic_DNA"/>
</dbReference>
<dbReference type="RefSeq" id="WP_011639329.1">
    <property type="nucleotide sequence ID" value="NC_008345.1"/>
</dbReference>
<dbReference type="SMR" id="Q07W69"/>
<dbReference type="STRING" id="318167.Sfri_3920"/>
<dbReference type="KEGG" id="sfr:Sfri_3920"/>
<dbReference type="eggNOG" id="COG0746">
    <property type="taxonomic scope" value="Bacteria"/>
</dbReference>
<dbReference type="HOGENOM" id="CLU_055597_5_1_6"/>
<dbReference type="OrthoDB" id="9788394at2"/>
<dbReference type="Proteomes" id="UP000000684">
    <property type="component" value="Chromosome"/>
</dbReference>
<dbReference type="GO" id="GO:0005737">
    <property type="term" value="C:cytoplasm"/>
    <property type="evidence" value="ECO:0007669"/>
    <property type="project" value="UniProtKB-SubCell"/>
</dbReference>
<dbReference type="GO" id="GO:0005525">
    <property type="term" value="F:GTP binding"/>
    <property type="evidence" value="ECO:0007669"/>
    <property type="project" value="UniProtKB-UniRule"/>
</dbReference>
<dbReference type="GO" id="GO:0046872">
    <property type="term" value="F:metal ion binding"/>
    <property type="evidence" value="ECO:0007669"/>
    <property type="project" value="UniProtKB-KW"/>
</dbReference>
<dbReference type="GO" id="GO:0061603">
    <property type="term" value="F:molybdenum cofactor guanylyltransferase activity"/>
    <property type="evidence" value="ECO:0007669"/>
    <property type="project" value="UniProtKB-EC"/>
</dbReference>
<dbReference type="GO" id="GO:1902758">
    <property type="term" value="P:bis(molybdopterin guanine dinucleotide)molybdenum biosynthetic process"/>
    <property type="evidence" value="ECO:0007669"/>
    <property type="project" value="TreeGrafter"/>
</dbReference>
<dbReference type="CDD" id="cd02503">
    <property type="entry name" value="MobA"/>
    <property type="match status" value="1"/>
</dbReference>
<dbReference type="Gene3D" id="3.90.550.10">
    <property type="entry name" value="Spore Coat Polysaccharide Biosynthesis Protein SpsA, Chain A"/>
    <property type="match status" value="1"/>
</dbReference>
<dbReference type="HAMAP" id="MF_00316">
    <property type="entry name" value="MobA"/>
    <property type="match status" value="1"/>
</dbReference>
<dbReference type="InterPro" id="IPR025877">
    <property type="entry name" value="MobA-like_NTP_Trfase"/>
</dbReference>
<dbReference type="InterPro" id="IPR013482">
    <property type="entry name" value="Molybde_CF_guanTrfase"/>
</dbReference>
<dbReference type="InterPro" id="IPR029044">
    <property type="entry name" value="Nucleotide-diphossugar_trans"/>
</dbReference>
<dbReference type="NCBIfam" id="TIGR02665">
    <property type="entry name" value="molyb_mobA"/>
    <property type="match status" value="1"/>
</dbReference>
<dbReference type="PANTHER" id="PTHR19136">
    <property type="entry name" value="MOLYBDENUM COFACTOR GUANYLYLTRANSFERASE"/>
    <property type="match status" value="1"/>
</dbReference>
<dbReference type="PANTHER" id="PTHR19136:SF81">
    <property type="entry name" value="MOLYBDENUM COFACTOR GUANYLYLTRANSFERASE"/>
    <property type="match status" value="1"/>
</dbReference>
<dbReference type="Pfam" id="PF12804">
    <property type="entry name" value="NTP_transf_3"/>
    <property type="match status" value="1"/>
</dbReference>
<dbReference type="SUPFAM" id="SSF53448">
    <property type="entry name" value="Nucleotide-diphospho-sugar transferases"/>
    <property type="match status" value="1"/>
</dbReference>
<sequence length="196" mass="21505">MAPQIDAVILAGGMARRMGGNDKGLVDLNGQAMICHTINKLSTQVDQILINANRNQAQYEQWGYTVFSDQDSGYLGPLAGMVTALKQTQADYLLVVPCDCPMLPTDLTARLLAALEQQQADLAVASDGEYEQPVVLLLKPHLAASMQAFLDAGERKIDFWYRQHKVAVESFADQPNAFVNINTPEQKQQLATQIAK</sequence>
<name>MOBA_SHEFN</name>
<feature type="chain" id="PRO_1000019148" description="Molybdenum cofactor guanylyltransferase">
    <location>
        <begin position="1"/>
        <end position="196"/>
    </location>
</feature>
<feature type="binding site" evidence="1">
    <location>
        <begin position="10"/>
        <end position="12"/>
    </location>
    <ligand>
        <name>GTP</name>
        <dbReference type="ChEBI" id="CHEBI:37565"/>
    </ligand>
</feature>
<feature type="binding site" evidence="1">
    <location>
        <position position="23"/>
    </location>
    <ligand>
        <name>GTP</name>
        <dbReference type="ChEBI" id="CHEBI:37565"/>
    </ligand>
</feature>
<feature type="binding site" evidence="1">
    <location>
        <position position="51"/>
    </location>
    <ligand>
        <name>GTP</name>
        <dbReference type="ChEBI" id="CHEBI:37565"/>
    </ligand>
</feature>
<feature type="binding site" evidence="1">
    <location>
        <position position="69"/>
    </location>
    <ligand>
        <name>GTP</name>
        <dbReference type="ChEBI" id="CHEBI:37565"/>
    </ligand>
</feature>
<feature type="binding site" evidence="1">
    <location>
        <position position="99"/>
    </location>
    <ligand>
        <name>GTP</name>
        <dbReference type="ChEBI" id="CHEBI:37565"/>
    </ligand>
</feature>
<feature type="binding site" evidence="1">
    <location>
        <position position="99"/>
    </location>
    <ligand>
        <name>Mg(2+)</name>
        <dbReference type="ChEBI" id="CHEBI:18420"/>
    </ligand>
</feature>
<gene>
    <name evidence="1" type="primary">mobA</name>
    <name type="ordered locus">Sfri_3920</name>
</gene>
<comment type="function">
    <text evidence="1">Transfers a GMP moiety from GTP to Mo-molybdopterin (Mo-MPT) cofactor (Moco or molybdenum cofactor) to form Mo-molybdopterin guanine dinucleotide (Mo-MGD) cofactor.</text>
</comment>
<comment type="catalytic activity">
    <reaction evidence="1">
        <text>Mo-molybdopterin + GTP + H(+) = Mo-molybdopterin guanine dinucleotide + diphosphate</text>
        <dbReference type="Rhea" id="RHEA:34243"/>
        <dbReference type="ChEBI" id="CHEBI:15378"/>
        <dbReference type="ChEBI" id="CHEBI:33019"/>
        <dbReference type="ChEBI" id="CHEBI:37565"/>
        <dbReference type="ChEBI" id="CHEBI:71302"/>
        <dbReference type="ChEBI" id="CHEBI:71310"/>
        <dbReference type="EC" id="2.7.7.77"/>
    </reaction>
</comment>
<comment type="cofactor">
    <cofactor evidence="1">
        <name>Mg(2+)</name>
        <dbReference type="ChEBI" id="CHEBI:18420"/>
    </cofactor>
</comment>
<comment type="subunit">
    <text evidence="1">Monomer.</text>
</comment>
<comment type="subcellular location">
    <subcellularLocation>
        <location evidence="1">Cytoplasm</location>
    </subcellularLocation>
</comment>
<comment type="domain">
    <text evidence="1">The N-terminal domain determines nucleotide recognition and specific binding, while the C-terminal domain determines the specific binding to the target protein.</text>
</comment>
<comment type="similarity">
    <text evidence="1">Belongs to the MobA family.</text>
</comment>
<evidence type="ECO:0000255" key="1">
    <source>
        <dbReference type="HAMAP-Rule" id="MF_00316"/>
    </source>
</evidence>
<reference key="1">
    <citation type="submission" date="2006-08" db="EMBL/GenBank/DDBJ databases">
        <title>Complete sequence of Shewanella frigidimarina NCIMB 400.</title>
        <authorList>
            <consortium name="US DOE Joint Genome Institute"/>
            <person name="Copeland A."/>
            <person name="Lucas S."/>
            <person name="Lapidus A."/>
            <person name="Barry K."/>
            <person name="Detter J.C."/>
            <person name="Glavina del Rio T."/>
            <person name="Hammon N."/>
            <person name="Israni S."/>
            <person name="Dalin E."/>
            <person name="Tice H."/>
            <person name="Pitluck S."/>
            <person name="Fredrickson J.K."/>
            <person name="Kolker E."/>
            <person name="McCuel L.A."/>
            <person name="DiChristina T."/>
            <person name="Nealson K.H."/>
            <person name="Newman D."/>
            <person name="Tiedje J.M."/>
            <person name="Zhou J."/>
            <person name="Romine M.F."/>
            <person name="Culley D.E."/>
            <person name="Serres M."/>
            <person name="Chertkov O."/>
            <person name="Brettin T."/>
            <person name="Bruce D."/>
            <person name="Han C."/>
            <person name="Tapia R."/>
            <person name="Gilna P."/>
            <person name="Schmutz J."/>
            <person name="Larimer F."/>
            <person name="Land M."/>
            <person name="Hauser L."/>
            <person name="Kyrpides N."/>
            <person name="Mikhailova N."/>
            <person name="Richardson P."/>
        </authorList>
    </citation>
    <scope>NUCLEOTIDE SEQUENCE [LARGE SCALE GENOMIC DNA]</scope>
    <source>
        <strain>NCIMB 400</strain>
    </source>
</reference>
<proteinExistence type="inferred from homology"/>
<accession>Q07W69</accession>
<protein>
    <recommendedName>
        <fullName evidence="1">Molybdenum cofactor guanylyltransferase</fullName>
        <shortName evidence="1">MoCo guanylyltransferase</shortName>
        <ecNumber evidence="1">2.7.7.77</ecNumber>
    </recommendedName>
    <alternativeName>
        <fullName evidence="1">GTP:molybdopterin guanylyltransferase</fullName>
    </alternativeName>
    <alternativeName>
        <fullName evidence="1">Mo-MPT guanylyltransferase</fullName>
    </alternativeName>
    <alternativeName>
        <fullName evidence="1">Molybdopterin guanylyltransferase</fullName>
    </alternativeName>
    <alternativeName>
        <fullName evidence="1">Molybdopterin-guanine dinucleotide synthase</fullName>
        <shortName evidence="1">MGD synthase</shortName>
    </alternativeName>
</protein>
<keyword id="KW-0963">Cytoplasm</keyword>
<keyword id="KW-0342">GTP-binding</keyword>
<keyword id="KW-0460">Magnesium</keyword>
<keyword id="KW-0479">Metal-binding</keyword>
<keyword id="KW-0501">Molybdenum cofactor biosynthesis</keyword>
<keyword id="KW-0547">Nucleotide-binding</keyword>
<keyword id="KW-1185">Reference proteome</keyword>
<keyword id="KW-0808">Transferase</keyword>